<keyword id="KW-0227">DNA damage</keyword>
<keyword id="KW-0234">DNA repair</keyword>
<keyword id="KW-0235">DNA replication</keyword>
<keyword id="KW-0436">Ligase</keyword>
<keyword id="KW-0460">Magnesium</keyword>
<keyword id="KW-0464">Manganese</keyword>
<keyword id="KW-0479">Metal-binding</keyword>
<keyword id="KW-0520">NAD</keyword>
<keyword id="KW-1185">Reference proteome</keyword>
<keyword id="KW-0862">Zinc</keyword>
<sequence>MMDVKLKIQQLVNLIKNYDYHYYVLSEPLIDDFEYDMLYKSLQQLEKDHPDLIQIDSPTQRVGGEAVKGFKKLNHNSPMLSLENAFSTKEIANFIDNINFQTNSKNEFVVEPKIDGVSISLTYKNGVLVHALTRGDGSVGEDVLNNVKTIKSIPLTIPFTKTIEIRGEIFVDKKTFLAINNQLEKPFANARNLAAGTIRNLNSEITAQRKLRALFYYIPNGLEESITTQTMVLEQLKQWKFPVSDTIRVFQNKFQLINYLEAFDKKREQLTFNLDGLVIKLNSLLFYQQLGATSKSPRWAIAFKFSPKFVQTKLTAVLITIGRTGRVNYTAKLESVNLDGTKVTAATLHNFDYIKTKDIRINDTVVIYKAGEIIPKVLKVNLEKRKNDTIIIQEQKYCPSCNSKLVKIVDEVDQYCTNETCKERNIQLINYFVSKTAMDINGLNINTITKLYEHNLVRSIVDLYDLKDKKNQVLKLDLKIGDKLFNKLVDNIENSKQKGMARLLTGLGIKHVGNVLAKNLANHFKNIKALQHASLENLISLNDVGITVAESLYNWFHDPNHLQLIEQLELRQVKTDQLPLKINFETNSIYFQKRFLITGSFNISRDQIKDLLSAKFDCQFASEVKPTVDFVIAGNKPTLRKINHAKELNIPIINEAIWT</sequence>
<organism>
    <name type="scientific">Mycoplasma genitalium (strain ATCC 33530 / DSM 19775 / NCTC 10195 / G37)</name>
    <name type="common">Mycoplasmoides genitalium</name>
    <dbReference type="NCBI Taxonomy" id="243273"/>
    <lineage>
        <taxon>Bacteria</taxon>
        <taxon>Bacillati</taxon>
        <taxon>Mycoplasmatota</taxon>
        <taxon>Mycoplasmoidales</taxon>
        <taxon>Mycoplasmoidaceae</taxon>
        <taxon>Mycoplasmoides</taxon>
    </lineage>
</organism>
<evidence type="ECO:0000255" key="1">
    <source>
        <dbReference type="HAMAP-Rule" id="MF_01588"/>
    </source>
</evidence>
<evidence type="ECO:0000305" key="2"/>
<reference key="1">
    <citation type="journal article" date="1995" name="Science">
        <title>The minimal gene complement of Mycoplasma genitalium.</title>
        <authorList>
            <person name="Fraser C.M."/>
            <person name="Gocayne J.D."/>
            <person name="White O."/>
            <person name="Adams M.D."/>
            <person name="Clayton R.A."/>
            <person name="Fleischmann R.D."/>
            <person name="Bult C.J."/>
            <person name="Kerlavage A.R."/>
            <person name="Sutton G.G."/>
            <person name="Kelley J.M."/>
            <person name="Fritchman J.L."/>
            <person name="Weidman J.F."/>
            <person name="Small K.V."/>
            <person name="Sandusky M."/>
            <person name="Fuhrmann J.L."/>
            <person name="Nguyen D.T."/>
            <person name="Utterback T.R."/>
            <person name="Saudek D.M."/>
            <person name="Phillips C.A."/>
            <person name="Merrick J.M."/>
            <person name="Tomb J.-F."/>
            <person name="Dougherty B.A."/>
            <person name="Bott K.F."/>
            <person name="Hu P.-C."/>
            <person name="Lucier T.S."/>
            <person name="Peterson S.N."/>
            <person name="Smith H.O."/>
            <person name="Hutchison C.A. III"/>
            <person name="Venter J.C."/>
        </authorList>
    </citation>
    <scope>NUCLEOTIDE SEQUENCE [LARGE SCALE GENOMIC DNA]</scope>
    <source>
        <strain>ATCC 33530 / DSM 19775 / NCTC 10195 / G37</strain>
    </source>
</reference>
<reference key="2">
    <citation type="journal article" date="1993" name="J. Bacteriol.">
        <title>A survey of the Mycoplasma genitalium genome by using random sequencing.</title>
        <authorList>
            <person name="Peterson S.N."/>
            <person name="Hu P.-C."/>
            <person name="Bott K.F."/>
            <person name="Hutchison C.A. III"/>
        </authorList>
    </citation>
    <scope>NUCLEOTIDE SEQUENCE [GENOMIC DNA] OF 13-122 AND 477-574</scope>
    <source>
        <strain>ATCC 33530 / DSM 19775 / NCTC 10195 / G37</strain>
    </source>
</reference>
<name>DNLJ_MYCGE</name>
<gene>
    <name evidence="1" type="primary">ligA</name>
    <name type="synonym">lig</name>
    <name type="ordered locus">MG254</name>
</gene>
<feature type="chain" id="PRO_0000161749" description="DNA ligase">
    <location>
        <begin position="1"/>
        <end position="659"/>
    </location>
</feature>
<feature type="domain" description="BRCT" evidence="1">
    <location>
        <begin position="585"/>
        <end position="655"/>
    </location>
</feature>
<feature type="active site" description="N6-AMP-lysine intermediate" evidence="1">
    <location>
        <position position="113"/>
    </location>
</feature>
<feature type="binding site" evidence="1">
    <location>
        <begin position="32"/>
        <end position="36"/>
    </location>
    <ligand>
        <name>NAD(+)</name>
        <dbReference type="ChEBI" id="CHEBI:57540"/>
    </ligand>
</feature>
<feature type="binding site" evidence="1">
    <location>
        <begin position="81"/>
        <end position="82"/>
    </location>
    <ligand>
        <name>NAD(+)</name>
        <dbReference type="ChEBI" id="CHEBI:57540"/>
    </ligand>
</feature>
<feature type="binding site" evidence="1">
    <location>
        <position position="111"/>
    </location>
    <ligand>
        <name>NAD(+)</name>
        <dbReference type="ChEBI" id="CHEBI:57540"/>
    </ligand>
</feature>
<feature type="binding site" evidence="1">
    <location>
        <position position="134"/>
    </location>
    <ligand>
        <name>NAD(+)</name>
        <dbReference type="ChEBI" id="CHEBI:57540"/>
    </ligand>
</feature>
<feature type="binding site" evidence="1">
    <location>
        <position position="168"/>
    </location>
    <ligand>
        <name>NAD(+)</name>
        <dbReference type="ChEBI" id="CHEBI:57540"/>
    </ligand>
</feature>
<feature type="binding site" evidence="1">
    <location>
        <position position="280"/>
    </location>
    <ligand>
        <name>NAD(+)</name>
        <dbReference type="ChEBI" id="CHEBI:57540"/>
    </ligand>
</feature>
<feature type="binding site" evidence="1">
    <location>
        <position position="304"/>
    </location>
    <ligand>
        <name>NAD(+)</name>
        <dbReference type="ChEBI" id="CHEBI:57540"/>
    </ligand>
</feature>
<feature type="binding site" evidence="1">
    <location>
        <position position="398"/>
    </location>
    <ligand>
        <name>Zn(2+)</name>
        <dbReference type="ChEBI" id="CHEBI:29105"/>
    </ligand>
</feature>
<feature type="binding site" evidence="1">
    <location>
        <position position="401"/>
    </location>
    <ligand>
        <name>Zn(2+)</name>
        <dbReference type="ChEBI" id="CHEBI:29105"/>
    </ligand>
</feature>
<feature type="binding site" evidence="1">
    <location>
        <position position="416"/>
    </location>
    <ligand>
        <name>Zn(2+)</name>
        <dbReference type="ChEBI" id="CHEBI:29105"/>
    </ligand>
</feature>
<feature type="binding site" evidence="1">
    <location>
        <position position="421"/>
    </location>
    <ligand>
        <name>Zn(2+)</name>
        <dbReference type="ChEBI" id="CHEBI:29105"/>
    </ligand>
</feature>
<feature type="sequence conflict" description="In Ref. 2." evidence="2" ref="2">
    <original>VGGEAVKGFKK</original>
    <variation>WEEKLWRVLKS</variation>
    <location>
        <begin position="62"/>
        <end position="72"/>
    </location>
</feature>
<proteinExistence type="inferred from homology"/>
<accession>P47496</accession>
<accession>Q49212</accession>
<accession>Q49213</accession>
<protein>
    <recommendedName>
        <fullName evidence="1">DNA ligase</fullName>
        <ecNumber evidence="1">6.5.1.2</ecNumber>
    </recommendedName>
    <alternativeName>
        <fullName evidence="1">Polydeoxyribonucleotide synthase [NAD(+)]</fullName>
    </alternativeName>
</protein>
<comment type="function">
    <text evidence="1">DNA ligase that catalyzes the formation of phosphodiester linkages between 5'-phosphoryl and 3'-hydroxyl groups in double-stranded DNA using NAD as a coenzyme and as the energy source for the reaction. It is essential for DNA replication and repair of damaged DNA.</text>
</comment>
<comment type="catalytic activity">
    <reaction evidence="1">
        <text>NAD(+) + (deoxyribonucleotide)n-3'-hydroxyl + 5'-phospho-(deoxyribonucleotide)m = (deoxyribonucleotide)n+m + AMP + beta-nicotinamide D-nucleotide.</text>
        <dbReference type="EC" id="6.5.1.2"/>
    </reaction>
</comment>
<comment type="cofactor">
    <cofactor evidence="1">
        <name>Mg(2+)</name>
        <dbReference type="ChEBI" id="CHEBI:18420"/>
    </cofactor>
    <cofactor evidence="1">
        <name>Mn(2+)</name>
        <dbReference type="ChEBI" id="CHEBI:29035"/>
    </cofactor>
</comment>
<comment type="similarity">
    <text evidence="1">Belongs to the NAD-dependent DNA ligase family. LigA subfamily.</text>
</comment>
<dbReference type="EC" id="6.5.1.2" evidence="1"/>
<dbReference type="EMBL" id="L43967">
    <property type="protein sequence ID" value="AAC71474.1"/>
    <property type="molecule type" value="Genomic_DNA"/>
</dbReference>
<dbReference type="EMBL" id="U02152">
    <property type="protein sequence ID" value="AAD12433.1"/>
    <property type="molecule type" value="Genomic_DNA"/>
</dbReference>
<dbReference type="EMBL" id="U01761">
    <property type="protein sequence ID" value="AAD10575.1"/>
    <property type="molecule type" value="Genomic_DNA"/>
</dbReference>
<dbReference type="EMBL" id="U01761">
    <property type="protein sequence ID" value="AAD10576.1"/>
    <property type="status" value="ALT_SEQ"/>
    <property type="molecule type" value="Genomic_DNA"/>
</dbReference>
<dbReference type="PIR" id="A64228">
    <property type="entry name" value="A64228"/>
</dbReference>
<dbReference type="SMR" id="P47496"/>
<dbReference type="FunCoup" id="P47496">
    <property type="interactions" value="116"/>
</dbReference>
<dbReference type="STRING" id="243273.MG_254"/>
<dbReference type="KEGG" id="mge:MG_254"/>
<dbReference type="eggNOG" id="COG0272">
    <property type="taxonomic scope" value="Bacteria"/>
</dbReference>
<dbReference type="HOGENOM" id="CLU_007764_2_1_14"/>
<dbReference type="InParanoid" id="P47496"/>
<dbReference type="Proteomes" id="UP000000807">
    <property type="component" value="Chromosome"/>
</dbReference>
<dbReference type="GO" id="GO:0005829">
    <property type="term" value="C:cytosol"/>
    <property type="evidence" value="ECO:0000318"/>
    <property type="project" value="GO_Central"/>
</dbReference>
<dbReference type="GO" id="GO:0003911">
    <property type="term" value="F:DNA ligase (NAD+) activity"/>
    <property type="evidence" value="ECO:0000318"/>
    <property type="project" value="GO_Central"/>
</dbReference>
<dbReference type="GO" id="GO:0046872">
    <property type="term" value="F:metal ion binding"/>
    <property type="evidence" value="ECO:0007669"/>
    <property type="project" value="UniProtKB-KW"/>
</dbReference>
<dbReference type="GO" id="GO:0006281">
    <property type="term" value="P:DNA repair"/>
    <property type="evidence" value="ECO:0007669"/>
    <property type="project" value="UniProtKB-KW"/>
</dbReference>
<dbReference type="GO" id="GO:0006260">
    <property type="term" value="P:DNA replication"/>
    <property type="evidence" value="ECO:0007669"/>
    <property type="project" value="UniProtKB-KW"/>
</dbReference>
<dbReference type="CDD" id="cd00114">
    <property type="entry name" value="LIGANc"/>
    <property type="match status" value="1"/>
</dbReference>
<dbReference type="FunFam" id="1.10.150.20:FF:000006">
    <property type="entry name" value="DNA ligase"/>
    <property type="match status" value="1"/>
</dbReference>
<dbReference type="Gene3D" id="6.20.10.30">
    <property type="match status" value="1"/>
</dbReference>
<dbReference type="Gene3D" id="1.10.150.20">
    <property type="entry name" value="5' to 3' exonuclease, C-terminal subdomain"/>
    <property type="match status" value="2"/>
</dbReference>
<dbReference type="Gene3D" id="3.40.50.10190">
    <property type="entry name" value="BRCT domain"/>
    <property type="match status" value="1"/>
</dbReference>
<dbReference type="Gene3D" id="3.30.470.30">
    <property type="entry name" value="DNA ligase/mRNA capping enzyme"/>
    <property type="match status" value="1"/>
</dbReference>
<dbReference type="Gene3D" id="1.10.287.610">
    <property type="entry name" value="Helix hairpin bin"/>
    <property type="match status" value="1"/>
</dbReference>
<dbReference type="Gene3D" id="2.40.50.140">
    <property type="entry name" value="Nucleic acid-binding proteins"/>
    <property type="match status" value="1"/>
</dbReference>
<dbReference type="HAMAP" id="MF_01588">
    <property type="entry name" value="DNA_ligase_A"/>
    <property type="match status" value="1"/>
</dbReference>
<dbReference type="InterPro" id="IPR001357">
    <property type="entry name" value="BRCT_dom"/>
</dbReference>
<dbReference type="InterPro" id="IPR036420">
    <property type="entry name" value="BRCT_dom_sf"/>
</dbReference>
<dbReference type="InterPro" id="IPR041663">
    <property type="entry name" value="DisA/LigA_HHH"/>
</dbReference>
<dbReference type="InterPro" id="IPR001679">
    <property type="entry name" value="DNA_ligase"/>
</dbReference>
<dbReference type="InterPro" id="IPR018239">
    <property type="entry name" value="DNA_ligase_AS"/>
</dbReference>
<dbReference type="InterPro" id="IPR033136">
    <property type="entry name" value="DNA_ligase_CS"/>
</dbReference>
<dbReference type="InterPro" id="IPR013839">
    <property type="entry name" value="DNAligase_adenylation"/>
</dbReference>
<dbReference type="InterPro" id="IPR013840">
    <property type="entry name" value="DNAligase_N"/>
</dbReference>
<dbReference type="InterPro" id="IPR012340">
    <property type="entry name" value="NA-bd_OB-fold"/>
</dbReference>
<dbReference type="InterPro" id="IPR004150">
    <property type="entry name" value="NAD_DNA_ligase_OB"/>
</dbReference>
<dbReference type="InterPro" id="IPR010994">
    <property type="entry name" value="RuvA_2-like"/>
</dbReference>
<dbReference type="InterPro" id="IPR004149">
    <property type="entry name" value="Znf_DNAligase_C4"/>
</dbReference>
<dbReference type="NCBIfam" id="TIGR00575">
    <property type="entry name" value="dnlj"/>
    <property type="match status" value="1"/>
</dbReference>
<dbReference type="NCBIfam" id="NF005932">
    <property type="entry name" value="PRK07956.1"/>
    <property type="match status" value="1"/>
</dbReference>
<dbReference type="PANTHER" id="PTHR23389">
    <property type="entry name" value="CHROMOSOME TRANSMISSION FIDELITY FACTOR 18"/>
    <property type="match status" value="1"/>
</dbReference>
<dbReference type="PANTHER" id="PTHR23389:SF9">
    <property type="entry name" value="DNA LIGASE"/>
    <property type="match status" value="1"/>
</dbReference>
<dbReference type="Pfam" id="PF00533">
    <property type="entry name" value="BRCT"/>
    <property type="match status" value="1"/>
</dbReference>
<dbReference type="Pfam" id="PF01653">
    <property type="entry name" value="DNA_ligase_aden"/>
    <property type="match status" value="1"/>
</dbReference>
<dbReference type="Pfam" id="PF03120">
    <property type="entry name" value="DNA_ligase_OB"/>
    <property type="match status" value="1"/>
</dbReference>
<dbReference type="Pfam" id="PF03119">
    <property type="entry name" value="DNA_ligase_ZBD"/>
    <property type="match status" value="1"/>
</dbReference>
<dbReference type="Pfam" id="PF12826">
    <property type="entry name" value="HHH_2"/>
    <property type="match status" value="1"/>
</dbReference>
<dbReference type="PIRSF" id="PIRSF001604">
    <property type="entry name" value="LigA"/>
    <property type="match status" value="1"/>
</dbReference>
<dbReference type="SMART" id="SM00532">
    <property type="entry name" value="LIGANc"/>
    <property type="match status" value="1"/>
</dbReference>
<dbReference type="SUPFAM" id="SSF52113">
    <property type="entry name" value="BRCT domain"/>
    <property type="match status" value="1"/>
</dbReference>
<dbReference type="SUPFAM" id="SSF56091">
    <property type="entry name" value="DNA ligase/mRNA capping enzyme, catalytic domain"/>
    <property type="match status" value="1"/>
</dbReference>
<dbReference type="SUPFAM" id="SSF50249">
    <property type="entry name" value="Nucleic acid-binding proteins"/>
    <property type="match status" value="1"/>
</dbReference>
<dbReference type="SUPFAM" id="SSF47781">
    <property type="entry name" value="RuvA domain 2-like"/>
    <property type="match status" value="1"/>
</dbReference>
<dbReference type="PROSITE" id="PS01055">
    <property type="entry name" value="DNA_LIGASE_N1"/>
    <property type="match status" value="1"/>
</dbReference>
<dbReference type="PROSITE" id="PS01056">
    <property type="entry name" value="DNA_LIGASE_N2"/>
    <property type="match status" value="1"/>
</dbReference>